<proteinExistence type="inferred from homology"/>
<comment type="function">
    <text evidence="1">Catalyzes the ATP-dependent amination of UTP to CTP with either L-glutamine or ammonia as the source of nitrogen. Regulates intracellular CTP levels through interactions with the four ribonucleotide triphosphates.</text>
</comment>
<comment type="catalytic activity">
    <reaction evidence="1">
        <text>UTP + L-glutamine + ATP + H2O = CTP + L-glutamate + ADP + phosphate + 2 H(+)</text>
        <dbReference type="Rhea" id="RHEA:26426"/>
        <dbReference type="ChEBI" id="CHEBI:15377"/>
        <dbReference type="ChEBI" id="CHEBI:15378"/>
        <dbReference type="ChEBI" id="CHEBI:29985"/>
        <dbReference type="ChEBI" id="CHEBI:30616"/>
        <dbReference type="ChEBI" id="CHEBI:37563"/>
        <dbReference type="ChEBI" id="CHEBI:43474"/>
        <dbReference type="ChEBI" id="CHEBI:46398"/>
        <dbReference type="ChEBI" id="CHEBI:58359"/>
        <dbReference type="ChEBI" id="CHEBI:456216"/>
        <dbReference type="EC" id="6.3.4.2"/>
    </reaction>
</comment>
<comment type="catalytic activity">
    <reaction evidence="1">
        <text>L-glutamine + H2O = L-glutamate + NH4(+)</text>
        <dbReference type="Rhea" id="RHEA:15889"/>
        <dbReference type="ChEBI" id="CHEBI:15377"/>
        <dbReference type="ChEBI" id="CHEBI:28938"/>
        <dbReference type="ChEBI" id="CHEBI:29985"/>
        <dbReference type="ChEBI" id="CHEBI:58359"/>
    </reaction>
</comment>
<comment type="catalytic activity">
    <reaction evidence="1">
        <text>UTP + NH4(+) + ATP = CTP + ADP + phosphate + 2 H(+)</text>
        <dbReference type="Rhea" id="RHEA:16597"/>
        <dbReference type="ChEBI" id="CHEBI:15378"/>
        <dbReference type="ChEBI" id="CHEBI:28938"/>
        <dbReference type="ChEBI" id="CHEBI:30616"/>
        <dbReference type="ChEBI" id="CHEBI:37563"/>
        <dbReference type="ChEBI" id="CHEBI:43474"/>
        <dbReference type="ChEBI" id="CHEBI:46398"/>
        <dbReference type="ChEBI" id="CHEBI:456216"/>
    </reaction>
</comment>
<comment type="activity regulation">
    <text evidence="1">Allosterically activated by GTP, when glutamine is the substrate; GTP has no effect on the reaction when ammonia is the substrate. The allosteric effector GTP functions by stabilizing the protein conformation that binds the tetrahedral intermediate(s) formed during glutamine hydrolysis. Inhibited by the product CTP, via allosteric rather than competitive inhibition.</text>
</comment>
<comment type="pathway">
    <text evidence="1">Pyrimidine metabolism; CTP biosynthesis via de novo pathway; CTP from UDP: step 2/2.</text>
</comment>
<comment type="subunit">
    <text evidence="1">Homotetramer.</text>
</comment>
<comment type="miscellaneous">
    <text evidence="1">CTPSs have evolved a hybrid strategy for distinguishing between UTP and CTP. The overlapping regions of the product feedback inhibitory and substrate sites recognize a common feature in both compounds, the triphosphate moiety. To differentiate isosteric substrate and product pyrimidine rings, an additional pocket far from the expected kinase/ligase catalytic site, specifically recognizes the cytosine and ribose portions of the product inhibitor.</text>
</comment>
<comment type="similarity">
    <text evidence="1">Belongs to the CTP synthase family.</text>
</comment>
<name>PYRG_XYLFT</name>
<protein>
    <recommendedName>
        <fullName evidence="1">CTP synthase</fullName>
        <ecNumber evidence="1">6.3.4.2</ecNumber>
    </recommendedName>
    <alternativeName>
        <fullName evidence="1">Cytidine 5'-triphosphate synthase</fullName>
    </alternativeName>
    <alternativeName>
        <fullName evidence="1">Cytidine triphosphate synthetase</fullName>
        <shortName evidence="1">CTP synthetase</shortName>
        <shortName evidence="1">CTPS</shortName>
    </alternativeName>
    <alternativeName>
        <fullName evidence="1">UTP--ammonia ligase</fullName>
    </alternativeName>
</protein>
<organism>
    <name type="scientific">Xylella fastidiosa (strain Temecula1 / ATCC 700964)</name>
    <dbReference type="NCBI Taxonomy" id="183190"/>
    <lineage>
        <taxon>Bacteria</taxon>
        <taxon>Pseudomonadati</taxon>
        <taxon>Pseudomonadota</taxon>
        <taxon>Gammaproteobacteria</taxon>
        <taxon>Lysobacterales</taxon>
        <taxon>Lysobacteraceae</taxon>
        <taxon>Xylella</taxon>
    </lineage>
</organism>
<gene>
    <name evidence="1" type="primary">pyrG</name>
    <name type="ordered locus">PD_0541</name>
</gene>
<accession>Q87DY8</accession>
<reference key="1">
    <citation type="journal article" date="2003" name="J. Bacteriol.">
        <title>Comparative analyses of the complete genome sequences of Pierce's disease and citrus variegated chlorosis strains of Xylella fastidiosa.</title>
        <authorList>
            <person name="Van Sluys M.A."/>
            <person name="de Oliveira M.C."/>
            <person name="Monteiro-Vitorello C.B."/>
            <person name="Miyaki C.Y."/>
            <person name="Furlan L.R."/>
            <person name="Camargo L.E.A."/>
            <person name="da Silva A.C.R."/>
            <person name="Moon D.H."/>
            <person name="Takita M.A."/>
            <person name="Lemos E.G.M."/>
            <person name="Machado M.A."/>
            <person name="Ferro M.I.T."/>
            <person name="da Silva F.R."/>
            <person name="Goldman M.H.S."/>
            <person name="Goldman G.H."/>
            <person name="Lemos M.V.F."/>
            <person name="El-Dorry H."/>
            <person name="Tsai S.M."/>
            <person name="Carrer H."/>
            <person name="Carraro D.M."/>
            <person name="de Oliveira R.C."/>
            <person name="Nunes L.R."/>
            <person name="Siqueira W.J."/>
            <person name="Coutinho L.L."/>
            <person name="Kimura E.T."/>
            <person name="Ferro E.S."/>
            <person name="Harakava R."/>
            <person name="Kuramae E.E."/>
            <person name="Marino C.L."/>
            <person name="Giglioti E."/>
            <person name="Abreu I.L."/>
            <person name="Alves L.M.C."/>
            <person name="do Amaral A.M."/>
            <person name="Baia G.S."/>
            <person name="Blanco S.R."/>
            <person name="Brito M.S."/>
            <person name="Cannavan F.S."/>
            <person name="Celestino A.V."/>
            <person name="da Cunha A.F."/>
            <person name="Fenille R.C."/>
            <person name="Ferro J.A."/>
            <person name="Formighieri E.F."/>
            <person name="Kishi L.T."/>
            <person name="Leoni S.G."/>
            <person name="Oliveira A.R."/>
            <person name="Rosa V.E. Jr."/>
            <person name="Sassaki F.T."/>
            <person name="Sena J.A.D."/>
            <person name="de Souza A.A."/>
            <person name="Truffi D."/>
            <person name="Tsukumo F."/>
            <person name="Yanai G.M."/>
            <person name="Zaros L.G."/>
            <person name="Civerolo E.L."/>
            <person name="Simpson A.J.G."/>
            <person name="Almeida N.F. Jr."/>
            <person name="Setubal J.C."/>
            <person name="Kitajima J.P."/>
        </authorList>
    </citation>
    <scope>NUCLEOTIDE SEQUENCE [LARGE SCALE GENOMIC DNA]</scope>
    <source>
        <strain>Temecula1 / ATCC 700964</strain>
    </source>
</reference>
<dbReference type="EC" id="6.3.4.2" evidence="1"/>
<dbReference type="EMBL" id="AE009442">
    <property type="protein sequence ID" value="AAO28414.1"/>
    <property type="molecule type" value="Genomic_DNA"/>
</dbReference>
<dbReference type="RefSeq" id="WP_004090560.1">
    <property type="nucleotide sequence ID" value="NC_004556.1"/>
</dbReference>
<dbReference type="SMR" id="Q87DY8"/>
<dbReference type="KEGG" id="xft:PD_0541"/>
<dbReference type="HOGENOM" id="CLU_011675_5_0_6"/>
<dbReference type="UniPathway" id="UPA00159">
    <property type="reaction ID" value="UER00277"/>
</dbReference>
<dbReference type="Proteomes" id="UP000002516">
    <property type="component" value="Chromosome"/>
</dbReference>
<dbReference type="GO" id="GO:0005829">
    <property type="term" value="C:cytosol"/>
    <property type="evidence" value="ECO:0007669"/>
    <property type="project" value="TreeGrafter"/>
</dbReference>
<dbReference type="GO" id="GO:0005524">
    <property type="term" value="F:ATP binding"/>
    <property type="evidence" value="ECO:0007669"/>
    <property type="project" value="UniProtKB-KW"/>
</dbReference>
<dbReference type="GO" id="GO:0003883">
    <property type="term" value="F:CTP synthase activity"/>
    <property type="evidence" value="ECO:0007669"/>
    <property type="project" value="UniProtKB-UniRule"/>
</dbReference>
<dbReference type="GO" id="GO:0004359">
    <property type="term" value="F:glutaminase activity"/>
    <property type="evidence" value="ECO:0007669"/>
    <property type="project" value="RHEA"/>
</dbReference>
<dbReference type="GO" id="GO:0042802">
    <property type="term" value="F:identical protein binding"/>
    <property type="evidence" value="ECO:0007669"/>
    <property type="project" value="TreeGrafter"/>
</dbReference>
<dbReference type="GO" id="GO:0046872">
    <property type="term" value="F:metal ion binding"/>
    <property type="evidence" value="ECO:0007669"/>
    <property type="project" value="UniProtKB-KW"/>
</dbReference>
<dbReference type="GO" id="GO:0044210">
    <property type="term" value="P:'de novo' CTP biosynthetic process"/>
    <property type="evidence" value="ECO:0007669"/>
    <property type="project" value="UniProtKB-UniRule"/>
</dbReference>
<dbReference type="GO" id="GO:0019856">
    <property type="term" value="P:pyrimidine nucleobase biosynthetic process"/>
    <property type="evidence" value="ECO:0007669"/>
    <property type="project" value="TreeGrafter"/>
</dbReference>
<dbReference type="CDD" id="cd03113">
    <property type="entry name" value="CTPS_N"/>
    <property type="match status" value="1"/>
</dbReference>
<dbReference type="CDD" id="cd01746">
    <property type="entry name" value="GATase1_CTP_Synthase"/>
    <property type="match status" value="1"/>
</dbReference>
<dbReference type="FunFam" id="3.40.50.300:FF:000009">
    <property type="entry name" value="CTP synthase"/>
    <property type="match status" value="1"/>
</dbReference>
<dbReference type="FunFam" id="3.40.50.880:FF:000002">
    <property type="entry name" value="CTP synthase"/>
    <property type="match status" value="1"/>
</dbReference>
<dbReference type="Gene3D" id="3.40.50.880">
    <property type="match status" value="1"/>
</dbReference>
<dbReference type="Gene3D" id="3.40.50.300">
    <property type="entry name" value="P-loop containing nucleotide triphosphate hydrolases"/>
    <property type="match status" value="1"/>
</dbReference>
<dbReference type="HAMAP" id="MF_01227">
    <property type="entry name" value="PyrG"/>
    <property type="match status" value="1"/>
</dbReference>
<dbReference type="InterPro" id="IPR029062">
    <property type="entry name" value="Class_I_gatase-like"/>
</dbReference>
<dbReference type="InterPro" id="IPR004468">
    <property type="entry name" value="CTP_synthase"/>
</dbReference>
<dbReference type="InterPro" id="IPR017456">
    <property type="entry name" value="CTP_synthase_N"/>
</dbReference>
<dbReference type="InterPro" id="IPR017926">
    <property type="entry name" value="GATASE"/>
</dbReference>
<dbReference type="InterPro" id="IPR033828">
    <property type="entry name" value="GATase1_CTP_Synthase"/>
</dbReference>
<dbReference type="InterPro" id="IPR027417">
    <property type="entry name" value="P-loop_NTPase"/>
</dbReference>
<dbReference type="NCBIfam" id="NF003792">
    <property type="entry name" value="PRK05380.1"/>
    <property type="match status" value="1"/>
</dbReference>
<dbReference type="NCBIfam" id="TIGR00337">
    <property type="entry name" value="PyrG"/>
    <property type="match status" value="1"/>
</dbReference>
<dbReference type="PANTHER" id="PTHR11550">
    <property type="entry name" value="CTP SYNTHASE"/>
    <property type="match status" value="1"/>
</dbReference>
<dbReference type="PANTHER" id="PTHR11550:SF0">
    <property type="entry name" value="CTP SYNTHASE-RELATED"/>
    <property type="match status" value="1"/>
</dbReference>
<dbReference type="Pfam" id="PF06418">
    <property type="entry name" value="CTP_synth_N"/>
    <property type="match status" value="1"/>
</dbReference>
<dbReference type="Pfam" id="PF00117">
    <property type="entry name" value="GATase"/>
    <property type="match status" value="1"/>
</dbReference>
<dbReference type="SUPFAM" id="SSF52317">
    <property type="entry name" value="Class I glutamine amidotransferase-like"/>
    <property type="match status" value="1"/>
</dbReference>
<dbReference type="SUPFAM" id="SSF52540">
    <property type="entry name" value="P-loop containing nucleoside triphosphate hydrolases"/>
    <property type="match status" value="1"/>
</dbReference>
<dbReference type="PROSITE" id="PS51273">
    <property type="entry name" value="GATASE_TYPE_1"/>
    <property type="match status" value="1"/>
</dbReference>
<evidence type="ECO:0000255" key="1">
    <source>
        <dbReference type="HAMAP-Rule" id="MF_01227"/>
    </source>
</evidence>
<sequence>MTPLIFVTGGVVSSLGKGIAAASLASILEARGLKVTMVKLDPYINVDPGTMSPFQHGEVYVTDDGAETDLDLGHYERFVRTRLSRKNSVTTGRIYQNVICKERRGDYLGATVQVIPHITDEIRRCIDEATASFDVALVEIGGTVGDIESLPFLEAIRQVRIERGAERTMFMHLTLVPYIAAAGELKTKPTQHSVKELRSIGIQPDVLLCRSEQVIPDSERRKIALFTNVSERAVIGCPDIDVLYGMPLELRRQGLDEIVIDQFKLSGTASLADLSEWEDVVDAIKHPLDEVTIAVVGKYVDYQDAYKSVGEALKHGGLRQRTKVNLKWVEAQDLEGSDMAALKDIDGILVPGGFGDRGFEGKVLASRYAREQRVPYFGICYGMQAAVVDYARHVAGLEGANSTENDRQSSHPVIALITEWRTTTGEVERRDEKSDLGGTMRLGLQEQRLKAGTLARELYGRDVVGERHRHRYEFNNRYRTQLEDAGLVIAAKSMDDTLVEMIELPREMHPWFLACQAHPEFLSTPRDGHPLFIGFVKASRARKAGGKLLREVCV</sequence>
<keyword id="KW-0067">ATP-binding</keyword>
<keyword id="KW-0315">Glutamine amidotransferase</keyword>
<keyword id="KW-0436">Ligase</keyword>
<keyword id="KW-0460">Magnesium</keyword>
<keyword id="KW-0479">Metal-binding</keyword>
<keyword id="KW-0547">Nucleotide-binding</keyword>
<keyword id="KW-0665">Pyrimidine biosynthesis</keyword>
<keyword id="KW-1185">Reference proteome</keyword>
<feature type="chain" id="PRO_0000138254" description="CTP synthase">
    <location>
        <begin position="1"/>
        <end position="554"/>
    </location>
</feature>
<feature type="domain" description="Glutamine amidotransferase type-1" evidence="1">
    <location>
        <begin position="292"/>
        <end position="545"/>
    </location>
</feature>
<feature type="region of interest" description="Amidoligase domain" evidence="1">
    <location>
        <begin position="1"/>
        <end position="265"/>
    </location>
</feature>
<feature type="active site" description="Nucleophile; for glutamine hydrolysis" evidence="1">
    <location>
        <position position="380"/>
    </location>
</feature>
<feature type="active site" evidence="1">
    <location>
        <position position="518"/>
    </location>
</feature>
<feature type="active site" evidence="1">
    <location>
        <position position="520"/>
    </location>
</feature>
<feature type="binding site" evidence="1">
    <location>
        <position position="13"/>
    </location>
    <ligand>
        <name>CTP</name>
        <dbReference type="ChEBI" id="CHEBI:37563"/>
        <note>allosteric inhibitor</note>
    </ligand>
</feature>
<feature type="binding site" evidence="1">
    <location>
        <position position="13"/>
    </location>
    <ligand>
        <name>UTP</name>
        <dbReference type="ChEBI" id="CHEBI:46398"/>
    </ligand>
</feature>
<feature type="binding site" evidence="1">
    <location>
        <begin position="14"/>
        <end position="19"/>
    </location>
    <ligand>
        <name>ATP</name>
        <dbReference type="ChEBI" id="CHEBI:30616"/>
    </ligand>
</feature>
<feature type="binding site" evidence="1">
    <location>
        <position position="71"/>
    </location>
    <ligand>
        <name>ATP</name>
        <dbReference type="ChEBI" id="CHEBI:30616"/>
    </ligand>
</feature>
<feature type="binding site" evidence="1">
    <location>
        <position position="71"/>
    </location>
    <ligand>
        <name>Mg(2+)</name>
        <dbReference type="ChEBI" id="CHEBI:18420"/>
    </ligand>
</feature>
<feature type="binding site" evidence="1">
    <location>
        <position position="139"/>
    </location>
    <ligand>
        <name>Mg(2+)</name>
        <dbReference type="ChEBI" id="CHEBI:18420"/>
    </ligand>
</feature>
<feature type="binding site" evidence="1">
    <location>
        <begin position="146"/>
        <end position="148"/>
    </location>
    <ligand>
        <name>CTP</name>
        <dbReference type="ChEBI" id="CHEBI:37563"/>
        <note>allosteric inhibitor</note>
    </ligand>
</feature>
<feature type="binding site" evidence="1">
    <location>
        <begin position="186"/>
        <end position="191"/>
    </location>
    <ligand>
        <name>CTP</name>
        <dbReference type="ChEBI" id="CHEBI:37563"/>
        <note>allosteric inhibitor</note>
    </ligand>
</feature>
<feature type="binding site" evidence="1">
    <location>
        <begin position="186"/>
        <end position="191"/>
    </location>
    <ligand>
        <name>UTP</name>
        <dbReference type="ChEBI" id="CHEBI:46398"/>
    </ligand>
</feature>
<feature type="binding site" evidence="1">
    <location>
        <position position="222"/>
    </location>
    <ligand>
        <name>CTP</name>
        <dbReference type="ChEBI" id="CHEBI:37563"/>
        <note>allosteric inhibitor</note>
    </ligand>
</feature>
<feature type="binding site" evidence="1">
    <location>
        <position position="222"/>
    </location>
    <ligand>
        <name>UTP</name>
        <dbReference type="ChEBI" id="CHEBI:46398"/>
    </ligand>
</feature>
<feature type="binding site" evidence="1">
    <location>
        <position position="353"/>
    </location>
    <ligand>
        <name>L-glutamine</name>
        <dbReference type="ChEBI" id="CHEBI:58359"/>
    </ligand>
</feature>
<feature type="binding site" evidence="1">
    <location>
        <begin position="381"/>
        <end position="384"/>
    </location>
    <ligand>
        <name>L-glutamine</name>
        <dbReference type="ChEBI" id="CHEBI:58359"/>
    </ligand>
</feature>
<feature type="binding site" evidence="1">
    <location>
        <position position="404"/>
    </location>
    <ligand>
        <name>L-glutamine</name>
        <dbReference type="ChEBI" id="CHEBI:58359"/>
    </ligand>
</feature>
<feature type="binding site" evidence="1">
    <location>
        <position position="471"/>
    </location>
    <ligand>
        <name>L-glutamine</name>
        <dbReference type="ChEBI" id="CHEBI:58359"/>
    </ligand>
</feature>